<feature type="chain" id="PRO_0000291560" description="Large ribosomal subunit protein uL18">
    <location>
        <begin position="1"/>
        <end position="297"/>
    </location>
</feature>
<evidence type="ECO:0000250" key="1">
    <source>
        <dbReference type="UniProtKB" id="P26321"/>
    </source>
</evidence>
<evidence type="ECO:0000305" key="2"/>
<dbReference type="EMBL" id="AY961534">
    <property type="protein sequence ID" value="AAX62436.1"/>
    <property type="molecule type" value="mRNA"/>
</dbReference>
<dbReference type="SMR" id="Q56FG6"/>
<dbReference type="GO" id="GO:0022625">
    <property type="term" value="C:cytosolic large ribosomal subunit"/>
    <property type="evidence" value="ECO:0007669"/>
    <property type="project" value="TreeGrafter"/>
</dbReference>
<dbReference type="GO" id="GO:0005634">
    <property type="term" value="C:nucleus"/>
    <property type="evidence" value="ECO:0007669"/>
    <property type="project" value="UniProtKB-SubCell"/>
</dbReference>
<dbReference type="GO" id="GO:0008097">
    <property type="term" value="F:5S rRNA binding"/>
    <property type="evidence" value="ECO:0007669"/>
    <property type="project" value="InterPro"/>
</dbReference>
<dbReference type="GO" id="GO:0003735">
    <property type="term" value="F:structural constituent of ribosome"/>
    <property type="evidence" value="ECO:0007669"/>
    <property type="project" value="InterPro"/>
</dbReference>
<dbReference type="GO" id="GO:0000027">
    <property type="term" value="P:ribosomal large subunit assembly"/>
    <property type="evidence" value="ECO:0007669"/>
    <property type="project" value="TreeGrafter"/>
</dbReference>
<dbReference type="GO" id="GO:0006412">
    <property type="term" value="P:translation"/>
    <property type="evidence" value="ECO:0007669"/>
    <property type="project" value="InterPro"/>
</dbReference>
<dbReference type="CDD" id="cd00432">
    <property type="entry name" value="Ribosomal_L18_L5e"/>
    <property type="match status" value="1"/>
</dbReference>
<dbReference type="FunFam" id="3.30.420.100:FF:000002">
    <property type="entry name" value="60S ribosomal protein L5"/>
    <property type="match status" value="1"/>
</dbReference>
<dbReference type="Gene3D" id="3.30.420.100">
    <property type="match status" value="1"/>
</dbReference>
<dbReference type="HAMAP" id="MF_01337_A">
    <property type="entry name" value="Ribosomal_uL18_A"/>
    <property type="match status" value="1"/>
</dbReference>
<dbReference type="InterPro" id="IPR005485">
    <property type="entry name" value="Rbsml_uL18_euk"/>
</dbReference>
<dbReference type="InterPro" id="IPR025607">
    <property type="entry name" value="Ribosomal_uL18_C_euk"/>
</dbReference>
<dbReference type="PANTHER" id="PTHR23410:SF12">
    <property type="entry name" value="LARGE RIBOSOMAL SUBUNIT PROTEIN UL18"/>
    <property type="match status" value="1"/>
</dbReference>
<dbReference type="PANTHER" id="PTHR23410">
    <property type="entry name" value="RIBOSOMAL PROTEIN L5-RELATED"/>
    <property type="match status" value="1"/>
</dbReference>
<dbReference type="Pfam" id="PF14204">
    <property type="entry name" value="Ribosomal_L18_c"/>
    <property type="match status" value="1"/>
</dbReference>
<dbReference type="Pfam" id="PF17144">
    <property type="entry name" value="Ribosomal_L5e"/>
    <property type="match status" value="1"/>
</dbReference>
<dbReference type="PRINTS" id="PR00058">
    <property type="entry name" value="RIBOSOMALL5"/>
</dbReference>
<dbReference type="SUPFAM" id="SSF53137">
    <property type="entry name" value="Translational machinery components"/>
    <property type="match status" value="1"/>
</dbReference>
<accession>Q56FG6</accession>
<organism>
    <name type="scientific">Lysiphlebus testaceipes</name>
    <name type="common">Greenbugs aphid parastoid</name>
    <dbReference type="NCBI Taxonomy" id="77504"/>
    <lineage>
        <taxon>Eukaryota</taxon>
        <taxon>Metazoa</taxon>
        <taxon>Ecdysozoa</taxon>
        <taxon>Arthropoda</taxon>
        <taxon>Hexapoda</taxon>
        <taxon>Insecta</taxon>
        <taxon>Pterygota</taxon>
        <taxon>Neoptera</taxon>
        <taxon>Endopterygota</taxon>
        <taxon>Hymenoptera</taxon>
        <taxon>Apocrita</taxon>
        <taxon>Ichneumonoidea</taxon>
        <taxon>Braconidae</taxon>
        <taxon>Aphidiinae</taxon>
        <taxon>Lysiphlebus</taxon>
    </lineage>
</organism>
<gene>
    <name type="primary">RpL5</name>
</gene>
<reference key="1">
    <citation type="submission" date="2005-03" db="EMBL/GenBank/DDBJ databases">
        <title>Ribosomal protein sequences from Lysiphlebus testaceipes.</title>
        <authorList>
            <person name="Weathersbee A.A. III"/>
            <person name="Hunter W.B."/>
            <person name="Panchal T.D."/>
            <person name="Dang P.M."/>
        </authorList>
    </citation>
    <scope>NUCLEOTIDE SEQUENCE [MRNA]</scope>
    <source>
        <strain>Florida</strain>
    </source>
</reference>
<name>RL5_LYSTE</name>
<keyword id="KW-0963">Cytoplasm</keyword>
<keyword id="KW-0539">Nucleus</keyword>
<keyword id="KW-0687">Ribonucleoprotein</keyword>
<keyword id="KW-0689">Ribosomal protein</keyword>
<keyword id="KW-0694">RNA-binding</keyword>
<keyword id="KW-0699">rRNA-binding</keyword>
<proteinExistence type="evidence at transcript level"/>
<protein>
    <recommendedName>
        <fullName evidence="2">Large ribosomal subunit protein uL18</fullName>
    </recommendedName>
    <alternativeName>
        <fullName>60S ribosomal protein L5</fullName>
    </alternativeName>
</protein>
<comment type="function">
    <text evidence="1">Component of the ribosome, a large ribonucleoprotein complex responsible for the synthesis of proteins in the cell. The small ribosomal subunit (SSU) binds messenger RNAs (mRNAs) and translates the encoded message by selecting cognate aminoacyl-transfer RNA (tRNA) molecules. The large subunit (LSU) contains the ribosomal catalytic site termed the peptidyl transferase center (PTC), which catalyzes the formation of peptide bonds, thereby polymerizing the amino acids delivered by tRNAs into a polypeptide chain. The nascent polypeptides leave the ribosome through a tunnel in the LSU and interact with protein factors that function in enzymatic processing, targeting, and the membrane insertion of nascent chains at the exit of the ribosomal tunnel.</text>
</comment>
<comment type="subunit">
    <text evidence="1">Component of the large ribosomal subunit (LSU).</text>
</comment>
<comment type="subcellular location">
    <subcellularLocation>
        <location evidence="1">Cytoplasm</location>
    </subcellularLocation>
    <subcellularLocation>
        <location evidence="1">Nucleus</location>
    </subcellularLocation>
</comment>
<comment type="similarity">
    <text evidence="2">Belongs to the universal ribosomal protein uL18 family.</text>
</comment>
<sequence>MGFVKVVKNKQYFKRFQVKYKRRREGKTDYYARKRLTVQDKSKYNTPKYRLIVRLSNKDITCQIAYSRIEGDRIVCAAYSHELPKYGIKVGLTNYAAAYCTGLLLARRLLKQLKLDTLYTGTTEVDGDEYNVEEHDDGPGAFRCYLDTGLMRTTTGARIFGAMKGAVDGGLNIPHSTKRFPGYDNESKSFNADVHRQHIFAHHIANYMKTLEENEPENFQRQFSQYIKNGITADGIEEMYKKAHEAIRADPDRAEIVKTKEPVKKRWNRAKLTLSERKDRVKQIKASFQKKLEETEA</sequence>